<reference key="1">
    <citation type="journal article" date="2008" name="J. Bacteriol.">
        <title>Complete genome sequence of the mosquitocidal bacterium Bacillus sphaericus C3-41 and comparison with those of closely related Bacillus species.</title>
        <authorList>
            <person name="Hu X."/>
            <person name="Fan W."/>
            <person name="Han B."/>
            <person name="Liu H."/>
            <person name="Zheng D."/>
            <person name="Li Q."/>
            <person name="Dong W."/>
            <person name="Yan J."/>
            <person name="Gao M."/>
            <person name="Berry C."/>
            <person name="Yuan Z."/>
        </authorList>
    </citation>
    <scope>NUCLEOTIDE SEQUENCE [LARGE SCALE GENOMIC DNA]</scope>
    <source>
        <strain>C3-41</strain>
    </source>
</reference>
<name>MURI_LYSSC</name>
<accession>B1HW77</accession>
<proteinExistence type="inferred from homology"/>
<evidence type="ECO:0000255" key="1">
    <source>
        <dbReference type="HAMAP-Rule" id="MF_00258"/>
    </source>
</evidence>
<feature type="chain" id="PRO_1000114054" description="Glutamate racemase">
    <location>
        <begin position="1"/>
        <end position="265"/>
    </location>
</feature>
<feature type="active site" description="Proton donor/acceptor" evidence="1">
    <location>
        <position position="72"/>
    </location>
</feature>
<feature type="active site" description="Proton donor/acceptor" evidence="1">
    <location>
        <position position="183"/>
    </location>
</feature>
<feature type="binding site" evidence="1">
    <location>
        <begin position="9"/>
        <end position="10"/>
    </location>
    <ligand>
        <name>substrate</name>
    </ligand>
</feature>
<feature type="binding site" evidence="1">
    <location>
        <begin position="41"/>
        <end position="42"/>
    </location>
    <ligand>
        <name>substrate</name>
    </ligand>
</feature>
<feature type="binding site" evidence="1">
    <location>
        <begin position="73"/>
        <end position="74"/>
    </location>
    <ligand>
        <name>substrate</name>
    </ligand>
</feature>
<feature type="binding site" evidence="1">
    <location>
        <begin position="184"/>
        <end position="185"/>
    </location>
    <ligand>
        <name>substrate</name>
    </ligand>
</feature>
<gene>
    <name evidence="1" type="primary">murI</name>
    <name type="ordered locus">Bsph_4048</name>
</gene>
<protein>
    <recommendedName>
        <fullName evidence="1">Glutamate racemase</fullName>
        <ecNumber evidence="1">5.1.1.3</ecNumber>
    </recommendedName>
</protein>
<comment type="function">
    <text evidence="1">Provides the (R)-glutamate required for cell wall biosynthesis.</text>
</comment>
<comment type="catalytic activity">
    <reaction evidence="1">
        <text>L-glutamate = D-glutamate</text>
        <dbReference type="Rhea" id="RHEA:12813"/>
        <dbReference type="ChEBI" id="CHEBI:29985"/>
        <dbReference type="ChEBI" id="CHEBI:29986"/>
        <dbReference type="EC" id="5.1.1.3"/>
    </reaction>
</comment>
<comment type="pathway">
    <text evidence="1">Cell wall biogenesis; peptidoglycan biosynthesis.</text>
</comment>
<comment type="similarity">
    <text evidence="1">Belongs to the aspartate/glutamate racemases family.</text>
</comment>
<keyword id="KW-0133">Cell shape</keyword>
<keyword id="KW-0961">Cell wall biogenesis/degradation</keyword>
<keyword id="KW-0413">Isomerase</keyword>
<keyword id="KW-0573">Peptidoglycan synthesis</keyword>
<organism>
    <name type="scientific">Lysinibacillus sphaericus (strain C3-41)</name>
    <dbReference type="NCBI Taxonomy" id="444177"/>
    <lineage>
        <taxon>Bacteria</taxon>
        <taxon>Bacillati</taxon>
        <taxon>Bacillota</taxon>
        <taxon>Bacilli</taxon>
        <taxon>Bacillales</taxon>
        <taxon>Bacillaceae</taxon>
        <taxon>Lysinibacillus</taxon>
    </lineage>
</organism>
<dbReference type="EC" id="5.1.1.3" evidence="1"/>
<dbReference type="EMBL" id="CP000817">
    <property type="protein sequence ID" value="ACA41516.1"/>
    <property type="molecule type" value="Genomic_DNA"/>
</dbReference>
<dbReference type="SMR" id="B1HW77"/>
<dbReference type="EnsemblBacteria" id="ACA41516">
    <property type="protein sequence ID" value="ACA41516"/>
    <property type="gene ID" value="Bsph_4048"/>
</dbReference>
<dbReference type="KEGG" id="lsp:Bsph_4048"/>
<dbReference type="HOGENOM" id="CLU_052344_0_2_9"/>
<dbReference type="UniPathway" id="UPA00219"/>
<dbReference type="Proteomes" id="UP000002164">
    <property type="component" value="Chromosome"/>
</dbReference>
<dbReference type="GO" id="GO:0008881">
    <property type="term" value="F:glutamate racemase activity"/>
    <property type="evidence" value="ECO:0007669"/>
    <property type="project" value="UniProtKB-UniRule"/>
</dbReference>
<dbReference type="GO" id="GO:0071555">
    <property type="term" value="P:cell wall organization"/>
    <property type="evidence" value="ECO:0007669"/>
    <property type="project" value="UniProtKB-KW"/>
</dbReference>
<dbReference type="GO" id="GO:0009252">
    <property type="term" value="P:peptidoglycan biosynthetic process"/>
    <property type="evidence" value="ECO:0007669"/>
    <property type="project" value="UniProtKB-UniRule"/>
</dbReference>
<dbReference type="GO" id="GO:0008360">
    <property type="term" value="P:regulation of cell shape"/>
    <property type="evidence" value="ECO:0007669"/>
    <property type="project" value="UniProtKB-KW"/>
</dbReference>
<dbReference type="FunFam" id="3.40.50.1860:FF:000002">
    <property type="entry name" value="Glutamate racemase"/>
    <property type="match status" value="1"/>
</dbReference>
<dbReference type="Gene3D" id="3.40.50.1860">
    <property type="match status" value="2"/>
</dbReference>
<dbReference type="HAMAP" id="MF_00258">
    <property type="entry name" value="Glu_racemase"/>
    <property type="match status" value="1"/>
</dbReference>
<dbReference type="InterPro" id="IPR015942">
    <property type="entry name" value="Asp/Glu/hydantoin_racemase"/>
</dbReference>
<dbReference type="InterPro" id="IPR001920">
    <property type="entry name" value="Asp/Glu_race"/>
</dbReference>
<dbReference type="InterPro" id="IPR018187">
    <property type="entry name" value="Asp/Glu_racemase_AS_1"/>
</dbReference>
<dbReference type="InterPro" id="IPR033134">
    <property type="entry name" value="Asp/Glu_racemase_AS_2"/>
</dbReference>
<dbReference type="InterPro" id="IPR004391">
    <property type="entry name" value="Glu_race"/>
</dbReference>
<dbReference type="NCBIfam" id="TIGR00067">
    <property type="entry name" value="glut_race"/>
    <property type="match status" value="1"/>
</dbReference>
<dbReference type="NCBIfam" id="NF002035">
    <property type="entry name" value="PRK00865.1-3"/>
    <property type="match status" value="1"/>
</dbReference>
<dbReference type="PANTHER" id="PTHR21198">
    <property type="entry name" value="GLUTAMATE RACEMASE"/>
    <property type="match status" value="1"/>
</dbReference>
<dbReference type="PANTHER" id="PTHR21198:SF2">
    <property type="entry name" value="GLUTAMATE RACEMASE"/>
    <property type="match status" value="1"/>
</dbReference>
<dbReference type="Pfam" id="PF01177">
    <property type="entry name" value="Asp_Glu_race"/>
    <property type="match status" value="1"/>
</dbReference>
<dbReference type="SUPFAM" id="SSF53681">
    <property type="entry name" value="Aspartate/glutamate racemase"/>
    <property type="match status" value="2"/>
</dbReference>
<dbReference type="PROSITE" id="PS00923">
    <property type="entry name" value="ASP_GLU_RACEMASE_1"/>
    <property type="match status" value="1"/>
</dbReference>
<dbReference type="PROSITE" id="PS00924">
    <property type="entry name" value="ASP_GLU_RACEMASE_2"/>
    <property type="match status" value="1"/>
</dbReference>
<sequence>MNAPIGVIDSGVGGLTVAKEIIKRLPNETIYYIGDTARCPYGPRSRQEVRNFTWQMAKALEKMNIKMLVIACNTATAVALESLQRNMPFPVLGVINAGARAAVKKTKRHEVVVLATEGTIKSGAYEEALLSLNTSTHIIPLACPTFVPLVESGEYKGEFATKLIAEGLKPLKNQQFDTVILGCTHYPILQKQIEAVVGEEVNVLSSAEETAKDAQEMLAYNGTLANANTVPAHKFFATGSVPIFRSIAENWLEQGTLDIRRITLK</sequence>